<gene>
    <name type="ordered locus">YPTS_3010</name>
</gene>
<comment type="function">
    <text evidence="1">Specifically methylates the adenine in position 37 of tRNA(1)(Val) (anticodon cmo5UAC).</text>
</comment>
<comment type="catalytic activity">
    <reaction evidence="1">
        <text>adenosine(37) in tRNA1(Val) + S-adenosyl-L-methionine = N(6)-methyladenosine(37) in tRNA1(Val) + S-adenosyl-L-homocysteine + H(+)</text>
        <dbReference type="Rhea" id="RHEA:43160"/>
        <dbReference type="Rhea" id="RHEA-COMP:10369"/>
        <dbReference type="Rhea" id="RHEA-COMP:10370"/>
        <dbReference type="ChEBI" id="CHEBI:15378"/>
        <dbReference type="ChEBI" id="CHEBI:57856"/>
        <dbReference type="ChEBI" id="CHEBI:59789"/>
        <dbReference type="ChEBI" id="CHEBI:74411"/>
        <dbReference type="ChEBI" id="CHEBI:74449"/>
        <dbReference type="EC" id="2.1.1.223"/>
    </reaction>
</comment>
<comment type="subcellular location">
    <subcellularLocation>
        <location evidence="1">Cytoplasm</location>
    </subcellularLocation>
</comment>
<comment type="similarity">
    <text evidence="1">Belongs to the methyltransferase superfamily. tRNA (adenine-N(6)-)-methyltransferase family.</text>
</comment>
<organism>
    <name type="scientific">Yersinia pseudotuberculosis serotype IB (strain PB1/+)</name>
    <dbReference type="NCBI Taxonomy" id="502801"/>
    <lineage>
        <taxon>Bacteria</taxon>
        <taxon>Pseudomonadati</taxon>
        <taxon>Pseudomonadota</taxon>
        <taxon>Gammaproteobacteria</taxon>
        <taxon>Enterobacterales</taxon>
        <taxon>Yersiniaceae</taxon>
        <taxon>Yersinia</taxon>
    </lineage>
</organism>
<proteinExistence type="inferred from homology"/>
<evidence type="ECO:0000255" key="1">
    <source>
        <dbReference type="HAMAP-Rule" id="MF_01872"/>
    </source>
</evidence>
<protein>
    <recommendedName>
        <fullName evidence="1">tRNA1(Val) (adenine(37)-N6)-methyltransferase</fullName>
        <ecNumber evidence="1">2.1.1.223</ecNumber>
    </recommendedName>
    <alternativeName>
        <fullName evidence="1">tRNA m6A37 methyltransferase</fullName>
    </alternativeName>
</protein>
<feature type="chain" id="PRO_0000387457" description="tRNA1(Val) (adenine(37)-N6)-methyltransferase">
    <location>
        <begin position="1"/>
        <end position="252"/>
    </location>
</feature>
<accession>B2KA56</accession>
<reference key="1">
    <citation type="submission" date="2008-04" db="EMBL/GenBank/DDBJ databases">
        <title>Complete sequence of Yersinia pseudotuberculosis PB1/+.</title>
        <authorList>
            <person name="Copeland A."/>
            <person name="Lucas S."/>
            <person name="Lapidus A."/>
            <person name="Glavina del Rio T."/>
            <person name="Dalin E."/>
            <person name="Tice H."/>
            <person name="Bruce D."/>
            <person name="Goodwin L."/>
            <person name="Pitluck S."/>
            <person name="Munk A.C."/>
            <person name="Brettin T."/>
            <person name="Detter J.C."/>
            <person name="Han C."/>
            <person name="Tapia R."/>
            <person name="Schmutz J."/>
            <person name="Larimer F."/>
            <person name="Land M."/>
            <person name="Hauser L."/>
            <person name="Challacombe J.F."/>
            <person name="Green L."/>
            <person name="Lindler L.E."/>
            <person name="Nikolich M.P."/>
            <person name="Richardson P."/>
        </authorList>
    </citation>
    <scope>NUCLEOTIDE SEQUENCE [LARGE SCALE GENOMIC DNA]</scope>
    <source>
        <strain>PB1/+</strain>
    </source>
</reference>
<dbReference type="EC" id="2.1.1.223" evidence="1"/>
<dbReference type="EMBL" id="CP001048">
    <property type="protein sequence ID" value="ACC89967.1"/>
    <property type="molecule type" value="Genomic_DNA"/>
</dbReference>
<dbReference type="SMR" id="B2KA56"/>
<dbReference type="KEGG" id="ypb:YPTS_3010"/>
<dbReference type="GO" id="GO:0005737">
    <property type="term" value="C:cytoplasm"/>
    <property type="evidence" value="ECO:0007669"/>
    <property type="project" value="UniProtKB-SubCell"/>
</dbReference>
<dbReference type="GO" id="GO:0003676">
    <property type="term" value="F:nucleic acid binding"/>
    <property type="evidence" value="ECO:0007669"/>
    <property type="project" value="InterPro"/>
</dbReference>
<dbReference type="GO" id="GO:0016430">
    <property type="term" value="F:tRNA (adenine-N6)-methyltransferase activity"/>
    <property type="evidence" value="ECO:0007669"/>
    <property type="project" value="UniProtKB-UniRule"/>
</dbReference>
<dbReference type="GO" id="GO:0032259">
    <property type="term" value="P:methylation"/>
    <property type="evidence" value="ECO:0007669"/>
    <property type="project" value="UniProtKB-KW"/>
</dbReference>
<dbReference type="GO" id="GO:0008033">
    <property type="term" value="P:tRNA processing"/>
    <property type="evidence" value="ECO:0007669"/>
    <property type="project" value="UniProtKB-UniRule"/>
</dbReference>
<dbReference type="CDD" id="cd02440">
    <property type="entry name" value="AdoMet_MTases"/>
    <property type="match status" value="1"/>
</dbReference>
<dbReference type="Gene3D" id="3.40.50.150">
    <property type="entry name" value="Vaccinia Virus protein VP39"/>
    <property type="match status" value="1"/>
</dbReference>
<dbReference type="HAMAP" id="MF_01872">
    <property type="entry name" value="tRNA_methyltr_YfiC"/>
    <property type="match status" value="1"/>
</dbReference>
<dbReference type="InterPro" id="IPR002052">
    <property type="entry name" value="DNA_methylase_N6_adenine_CS"/>
</dbReference>
<dbReference type="InterPro" id="IPR029063">
    <property type="entry name" value="SAM-dependent_MTases_sf"/>
</dbReference>
<dbReference type="InterPro" id="IPR007848">
    <property type="entry name" value="Small_mtfrase_dom"/>
</dbReference>
<dbReference type="InterPro" id="IPR050210">
    <property type="entry name" value="tRNA_Adenine-N(6)_MTase"/>
</dbReference>
<dbReference type="InterPro" id="IPR022882">
    <property type="entry name" value="tRNA_adenine-N6_MeTrfase"/>
</dbReference>
<dbReference type="NCBIfam" id="NF047853">
    <property type="entry name" value="tRm6a37MtseTrmN"/>
    <property type="match status" value="1"/>
</dbReference>
<dbReference type="PANTHER" id="PTHR47739">
    <property type="entry name" value="TRNA1(VAL) (ADENINE(37)-N6)-METHYLTRANSFERASE"/>
    <property type="match status" value="1"/>
</dbReference>
<dbReference type="PANTHER" id="PTHR47739:SF1">
    <property type="entry name" value="TRNA1(VAL) (ADENINE(37)-N6)-METHYLTRANSFERASE"/>
    <property type="match status" value="1"/>
</dbReference>
<dbReference type="Pfam" id="PF05175">
    <property type="entry name" value="MTS"/>
    <property type="match status" value="1"/>
</dbReference>
<dbReference type="PRINTS" id="PR00507">
    <property type="entry name" value="N12N6MTFRASE"/>
</dbReference>
<dbReference type="SUPFAM" id="SSF53335">
    <property type="entry name" value="S-adenosyl-L-methionine-dependent methyltransferases"/>
    <property type="match status" value="1"/>
</dbReference>
<dbReference type="PROSITE" id="PS00092">
    <property type="entry name" value="N6_MTASE"/>
    <property type="match status" value="1"/>
</dbReference>
<name>TRMN6_YERPB</name>
<sequence length="252" mass="28174">MVTNVGEQLKKQPVLRGGGFTFKQFFVAHDRCAMKVGTDGVLLGAWVPVLHARRVLDIGCGSGLIALMIAQRSLPQVQIDGVELEPAAAQQASSNVELSPWAERIHIHQQDIHQFAENHPHQYDLIVSNPPYFAPAIACRDEARDTARYTGSLTHDALLNCAEKLITEDGMFCVVLPHELGIEFARLAGQQGWFVRCQVDIRDRPGKPLHRMLLTLSRQAGETVYQHLALRQSEGVYSPEFCQLISDFYLNY</sequence>
<keyword id="KW-0963">Cytoplasm</keyword>
<keyword id="KW-0489">Methyltransferase</keyword>
<keyword id="KW-0949">S-adenosyl-L-methionine</keyword>
<keyword id="KW-0808">Transferase</keyword>
<keyword id="KW-0819">tRNA processing</keyword>